<accession>Q7UUJ7</accession>
<name>ARGJ_RHOBA</name>
<gene>
    <name evidence="1" type="primary">argJ</name>
    <name type="ordered locus">RB3255</name>
</gene>
<keyword id="KW-0012">Acyltransferase</keyword>
<keyword id="KW-0028">Amino-acid biosynthesis</keyword>
<keyword id="KW-0055">Arginine biosynthesis</keyword>
<keyword id="KW-0068">Autocatalytic cleavage</keyword>
<keyword id="KW-0963">Cytoplasm</keyword>
<keyword id="KW-0511">Multifunctional enzyme</keyword>
<keyword id="KW-1185">Reference proteome</keyword>
<keyword id="KW-0808">Transferase</keyword>
<feature type="chain" id="PRO_0000002225" description="Arginine biosynthesis bifunctional protein ArgJ alpha chain" evidence="1">
    <location>
        <begin position="1"/>
        <end position="194"/>
    </location>
</feature>
<feature type="chain" id="PRO_0000002226" description="Arginine biosynthesis bifunctional protein ArgJ beta chain" evidence="1">
    <location>
        <begin position="195"/>
        <end position="410"/>
    </location>
</feature>
<feature type="active site" description="Nucleophile" evidence="1">
    <location>
        <position position="195"/>
    </location>
</feature>
<feature type="binding site" evidence="1">
    <location>
        <position position="158"/>
    </location>
    <ligand>
        <name>substrate</name>
    </ligand>
</feature>
<feature type="binding site" evidence="1">
    <location>
        <position position="184"/>
    </location>
    <ligand>
        <name>substrate</name>
    </ligand>
</feature>
<feature type="binding site" evidence="1">
    <location>
        <position position="195"/>
    </location>
    <ligand>
        <name>substrate</name>
    </ligand>
</feature>
<feature type="binding site" evidence="1">
    <location>
        <position position="282"/>
    </location>
    <ligand>
        <name>substrate</name>
    </ligand>
</feature>
<feature type="binding site" evidence="1">
    <location>
        <position position="405"/>
    </location>
    <ligand>
        <name>substrate</name>
    </ligand>
</feature>
<feature type="binding site" evidence="1">
    <location>
        <position position="410"/>
    </location>
    <ligand>
        <name>substrate</name>
    </ligand>
</feature>
<feature type="site" description="Involved in the stabilization of negative charge on the oxyanion by the formation of the oxyanion hole" evidence="1">
    <location>
        <position position="119"/>
    </location>
</feature>
<feature type="site" description="Involved in the stabilization of negative charge on the oxyanion by the formation of the oxyanion hole" evidence="1">
    <location>
        <position position="120"/>
    </location>
</feature>
<feature type="site" description="Cleavage; by autolysis" evidence="1">
    <location>
        <begin position="194"/>
        <end position="195"/>
    </location>
</feature>
<organism>
    <name type="scientific">Rhodopirellula baltica (strain DSM 10527 / NCIMB 13988 / SH1)</name>
    <dbReference type="NCBI Taxonomy" id="243090"/>
    <lineage>
        <taxon>Bacteria</taxon>
        <taxon>Pseudomonadati</taxon>
        <taxon>Planctomycetota</taxon>
        <taxon>Planctomycetia</taxon>
        <taxon>Pirellulales</taxon>
        <taxon>Pirellulaceae</taxon>
        <taxon>Rhodopirellula</taxon>
    </lineage>
</organism>
<comment type="function">
    <text evidence="1">Catalyzes two activities which are involved in the cyclic version of arginine biosynthesis: the synthesis of N-acetylglutamate from glutamate and acetyl-CoA as the acetyl donor, and of ornithine by transacetylation between N(2)-acetylornithine and glutamate.</text>
</comment>
<comment type="catalytic activity">
    <reaction evidence="1">
        <text>N(2)-acetyl-L-ornithine + L-glutamate = N-acetyl-L-glutamate + L-ornithine</text>
        <dbReference type="Rhea" id="RHEA:15349"/>
        <dbReference type="ChEBI" id="CHEBI:29985"/>
        <dbReference type="ChEBI" id="CHEBI:44337"/>
        <dbReference type="ChEBI" id="CHEBI:46911"/>
        <dbReference type="ChEBI" id="CHEBI:57805"/>
        <dbReference type="EC" id="2.3.1.35"/>
    </reaction>
</comment>
<comment type="catalytic activity">
    <reaction evidence="1">
        <text>L-glutamate + acetyl-CoA = N-acetyl-L-glutamate + CoA + H(+)</text>
        <dbReference type="Rhea" id="RHEA:24292"/>
        <dbReference type="ChEBI" id="CHEBI:15378"/>
        <dbReference type="ChEBI" id="CHEBI:29985"/>
        <dbReference type="ChEBI" id="CHEBI:44337"/>
        <dbReference type="ChEBI" id="CHEBI:57287"/>
        <dbReference type="ChEBI" id="CHEBI:57288"/>
        <dbReference type="EC" id="2.3.1.1"/>
    </reaction>
</comment>
<comment type="pathway">
    <text evidence="1">Amino-acid biosynthesis; L-arginine biosynthesis; L-ornithine and N-acetyl-L-glutamate from L-glutamate and N(2)-acetyl-L-ornithine (cyclic): step 1/1.</text>
</comment>
<comment type="pathway">
    <text evidence="1">Amino-acid biosynthesis; L-arginine biosynthesis; N(2)-acetyl-L-ornithine from L-glutamate: step 1/4.</text>
</comment>
<comment type="subunit">
    <text evidence="1">Heterotetramer of two alpha and two beta chains.</text>
</comment>
<comment type="subcellular location">
    <subcellularLocation>
        <location evidence="1">Cytoplasm</location>
    </subcellularLocation>
</comment>
<comment type="similarity">
    <text evidence="1">Belongs to the ArgJ family.</text>
</comment>
<sequence>MTDTAPQNDPTTSHVLPKGIRFAGVAAGIKASGKPDVSLIVTDRPSVMAGVYTTNQIVAAPVVLTRAKTPTSTGRVVLTNSGNANACTGDEGMQNAKTMCDLAAKLADCDSADVMVMSTGVIGKPLPMEKVRAGIEAAAGKLGDAESDFIASADAICTTDQFRKTVSETVTIRGQQFRIAAMCKGAGMIAPNMATMLGVVMTDAPIGPDAAQASLKQIAGRTFNRVSVDGHTSTNDTVMLVCTGMSVSEDAKEFNSDELKIWQEAATQVALKLAKMLVADGEGAARFFEVRVSGAADDGDAFVIAKTVAASPLVKTAITGGDPNWGRIVSAAGYAGPKIEPERTSLVIDGVTVFENGTPLSIDAAKLSESMKANSEVLADLTVGDGPGKASFWASDLTEAYVRFNSLYTT</sequence>
<dbReference type="EC" id="2.3.1.35" evidence="1"/>
<dbReference type="EC" id="2.3.1.1" evidence="1"/>
<dbReference type="EMBL" id="BX294138">
    <property type="protein sequence ID" value="CAD73082.1"/>
    <property type="molecule type" value="Genomic_DNA"/>
</dbReference>
<dbReference type="RefSeq" id="NP_865398.1">
    <property type="nucleotide sequence ID" value="NC_005027.1"/>
</dbReference>
<dbReference type="RefSeq" id="WP_011119260.1">
    <property type="nucleotide sequence ID" value="NC_005027.1"/>
</dbReference>
<dbReference type="SMR" id="Q7UUJ7"/>
<dbReference type="STRING" id="243090.RB3255"/>
<dbReference type="EnsemblBacteria" id="CAD73082">
    <property type="protein sequence ID" value="CAD73082"/>
    <property type="gene ID" value="RB3255"/>
</dbReference>
<dbReference type="KEGG" id="rba:RB3255"/>
<dbReference type="PATRIC" id="fig|243090.15.peg.1498"/>
<dbReference type="eggNOG" id="COG1364">
    <property type="taxonomic scope" value="Bacteria"/>
</dbReference>
<dbReference type="HOGENOM" id="CLU_027172_1_0_0"/>
<dbReference type="InParanoid" id="Q7UUJ7"/>
<dbReference type="OrthoDB" id="9804242at2"/>
<dbReference type="UniPathway" id="UPA00068">
    <property type="reaction ID" value="UER00106"/>
</dbReference>
<dbReference type="UniPathway" id="UPA00068">
    <property type="reaction ID" value="UER00111"/>
</dbReference>
<dbReference type="Proteomes" id="UP000001025">
    <property type="component" value="Chromosome"/>
</dbReference>
<dbReference type="GO" id="GO:0005737">
    <property type="term" value="C:cytoplasm"/>
    <property type="evidence" value="ECO:0007669"/>
    <property type="project" value="UniProtKB-SubCell"/>
</dbReference>
<dbReference type="GO" id="GO:0004358">
    <property type="term" value="F:glutamate N-acetyltransferase activity"/>
    <property type="evidence" value="ECO:0007669"/>
    <property type="project" value="UniProtKB-UniRule"/>
</dbReference>
<dbReference type="GO" id="GO:0004042">
    <property type="term" value="F:L-glutamate N-acetyltransferase activity"/>
    <property type="evidence" value="ECO:0000318"/>
    <property type="project" value="GO_Central"/>
</dbReference>
<dbReference type="GO" id="GO:0006526">
    <property type="term" value="P:L-arginine biosynthetic process"/>
    <property type="evidence" value="ECO:0007669"/>
    <property type="project" value="UniProtKB-UniRule"/>
</dbReference>
<dbReference type="GO" id="GO:0006592">
    <property type="term" value="P:ornithine biosynthetic process"/>
    <property type="evidence" value="ECO:0000318"/>
    <property type="project" value="GO_Central"/>
</dbReference>
<dbReference type="CDD" id="cd02152">
    <property type="entry name" value="OAT"/>
    <property type="match status" value="1"/>
</dbReference>
<dbReference type="FunFam" id="3.10.20.340:FF:000003">
    <property type="entry name" value="Arginine biosynthesis bifunctional protein ArgJ"/>
    <property type="match status" value="1"/>
</dbReference>
<dbReference type="FunFam" id="3.60.70.12:FF:000001">
    <property type="entry name" value="Arginine biosynthesis bifunctional protein ArgJ, chloroplastic"/>
    <property type="match status" value="1"/>
</dbReference>
<dbReference type="Gene3D" id="3.10.20.340">
    <property type="entry name" value="ArgJ beta chain, C-terminal domain"/>
    <property type="match status" value="1"/>
</dbReference>
<dbReference type="Gene3D" id="3.60.70.12">
    <property type="entry name" value="L-amino peptidase D-ALA esterase/amidase"/>
    <property type="match status" value="1"/>
</dbReference>
<dbReference type="HAMAP" id="MF_01106">
    <property type="entry name" value="ArgJ"/>
    <property type="match status" value="1"/>
</dbReference>
<dbReference type="InterPro" id="IPR002813">
    <property type="entry name" value="Arg_biosynth_ArgJ"/>
</dbReference>
<dbReference type="InterPro" id="IPR016117">
    <property type="entry name" value="ArgJ-like_dom_sf"/>
</dbReference>
<dbReference type="InterPro" id="IPR042195">
    <property type="entry name" value="ArgJ_beta_C"/>
</dbReference>
<dbReference type="NCBIfam" id="TIGR00120">
    <property type="entry name" value="ArgJ"/>
    <property type="match status" value="1"/>
</dbReference>
<dbReference type="NCBIfam" id="NF003802">
    <property type="entry name" value="PRK05388.1"/>
    <property type="match status" value="1"/>
</dbReference>
<dbReference type="PANTHER" id="PTHR23100">
    <property type="entry name" value="ARGININE BIOSYNTHESIS BIFUNCTIONAL PROTEIN ARGJ"/>
    <property type="match status" value="1"/>
</dbReference>
<dbReference type="PANTHER" id="PTHR23100:SF0">
    <property type="entry name" value="ARGININE BIOSYNTHESIS BIFUNCTIONAL PROTEIN ARGJ, MITOCHONDRIAL"/>
    <property type="match status" value="1"/>
</dbReference>
<dbReference type="Pfam" id="PF01960">
    <property type="entry name" value="ArgJ"/>
    <property type="match status" value="1"/>
</dbReference>
<dbReference type="SUPFAM" id="SSF56266">
    <property type="entry name" value="DmpA/ArgJ-like"/>
    <property type="match status" value="1"/>
</dbReference>
<proteinExistence type="inferred from homology"/>
<reference key="1">
    <citation type="journal article" date="2003" name="Proc. Natl. Acad. Sci. U.S.A.">
        <title>Complete genome sequence of the marine planctomycete Pirellula sp. strain 1.</title>
        <authorList>
            <person name="Gloeckner F.O."/>
            <person name="Kube M."/>
            <person name="Bauer M."/>
            <person name="Teeling H."/>
            <person name="Lombardot T."/>
            <person name="Ludwig W."/>
            <person name="Gade D."/>
            <person name="Beck A."/>
            <person name="Borzym K."/>
            <person name="Heitmann K."/>
            <person name="Rabus R."/>
            <person name="Schlesner H."/>
            <person name="Amann R."/>
            <person name="Reinhardt R."/>
        </authorList>
    </citation>
    <scope>NUCLEOTIDE SEQUENCE [LARGE SCALE GENOMIC DNA]</scope>
    <source>
        <strain>DSM 10527 / NCIMB 13988 / SH1</strain>
    </source>
</reference>
<evidence type="ECO:0000255" key="1">
    <source>
        <dbReference type="HAMAP-Rule" id="MF_01106"/>
    </source>
</evidence>
<protein>
    <recommendedName>
        <fullName evidence="1">Arginine biosynthesis bifunctional protein ArgJ</fullName>
    </recommendedName>
    <domain>
        <recommendedName>
            <fullName evidence="1">Glutamate N-acetyltransferase</fullName>
            <ecNumber evidence="1">2.3.1.35</ecNumber>
        </recommendedName>
        <alternativeName>
            <fullName evidence="1">Ornithine acetyltransferase</fullName>
            <shortName evidence="1">OATase</shortName>
        </alternativeName>
        <alternativeName>
            <fullName evidence="1">Ornithine transacetylase</fullName>
        </alternativeName>
    </domain>
    <domain>
        <recommendedName>
            <fullName evidence="1">Amino-acid acetyltransferase</fullName>
            <ecNumber evidence="1">2.3.1.1</ecNumber>
        </recommendedName>
        <alternativeName>
            <fullName evidence="1">N-acetylglutamate synthase</fullName>
            <shortName evidence="1">AGSase</shortName>
        </alternativeName>
    </domain>
    <component>
        <recommendedName>
            <fullName evidence="1">Arginine biosynthesis bifunctional protein ArgJ alpha chain</fullName>
        </recommendedName>
    </component>
    <component>
        <recommendedName>
            <fullName evidence="1">Arginine biosynthesis bifunctional protein ArgJ beta chain</fullName>
        </recommendedName>
    </component>
</protein>